<name>SSBP_ARATH</name>
<sequence>MNSLAIRVSKVLRSSSISPLAISAERGSKSWFSTGPIDEGVEEDFEENVTERPELQPHGVDPRKGWGFRGVHRAIICGKVGQAPLQKILRNGRTVTIFTVGTGGMFDQRLVGATNQPKPAQWHRIAVHNEVLGSYAVQKLAKNSSVYVEGDIETRVYNDSISSEVKSIPEICVRRDGKIRMIKYGESISKISFDELKEGLI</sequence>
<keyword id="KW-0238">DNA-binding</keyword>
<keyword id="KW-0496">Mitochondrion</keyword>
<keyword id="KW-1185">Reference proteome</keyword>
<keyword id="KW-0809">Transit peptide</keyword>
<protein>
    <recommendedName>
        <fullName>Single-stranded DNA-binding protein, mitochondrial</fullName>
    </recommendedName>
</protein>
<reference key="1">
    <citation type="journal article" date="1999" name="Nature">
        <title>Sequence and analysis of chromosome 4 of the plant Arabidopsis thaliana.</title>
        <authorList>
            <person name="Mayer K.F.X."/>
            <person name="Schueller C."/>
            <person name="Wambutt R."/>
            <person name="Murphy G."/>
            <person name="Volckaert G."/>
            <person name="Pohl T."/>
            <person name="Duesterhoeft A."/>
            <person name="Stiekema W."/>
            <person name="Entian K.-D."/>
            <person name="Terryn N."/>
            <person name="Harris B."/>
            <person name="Ansorge W."/>
            <person name="Brandt P."/>
            <person name="Grivell L.A."/>
            <person name="Rieger M."/>
            <person name="Weichselgartner M."/>
            <person name="de Simone V."/>
            <person name="Obermaier B."/>
            <person name="Mache R."/>
            <person name="Mueller M."/>
            <person name="Kreis M."/>
            <person name="Delseny M."/>
            <person name="Puigdomenech P."/>
            <person name="Watson M."/>
            <person name="Schmidtheini T."/>
            <person name="Reichert B."/>
            <person name="Portetelle D."/>
            <person name="Perez-Alonso M."/>
            <person name="Boutry M."/>
            <person name="Bancroft I."/>
            <person name="Vos P."/>
            <person name="Hoheisel J."/>
            <person name="Zimmermann W."/>
            <person name="Wedler H."/>
            <person name="Ridley P."/>
            <person name="Langham S.-A."/>
            <person name="McCullagh B."/>
            <person name="Bilham L."/>
            <person name="Robben J."/>
            <person name="van der Schueren J."/>
            <person name="Grymonprez B."/>
            <person name="Chuang Y.-J."/>
            <person name="Vandenbussche F."/>
            <person name="Braeken M."/>
            <person name="Weltjens I."/>
            <person name="Voet M."/>
            <person name="Bastiaens I."/>
            <person name="Aert R."/>
            <person name="Defoor E."/>
            <person name="Weitzenegger T."/>
            <person name="Bothe G."/>
            <person name="Ramsperger U."/>
            <person name="Hilbert H."/>
            <person name="Braun M."/>
            <person name="Holzer E."/>
            <person name="Brandt A."/>
            <person name="Peters S."/>
            <person name="van Staveren M."/>
            <person name="Dirkse W."/>
            <person name="Mooijman P."/>
            <person name="Klein Lankhorst R."/>
            <person name="Rose M."/>
            <person name="Hauf J."/>
            <person name="Koetter P."/>
            <person name="Berneiser S."/>
            <person name="Hempel S."/>
            <person name="Feldpausch M."/>
            <person name="Lamberth S."/>
            <person name="Van den Daele H."/>
            <person name="De Keyser A."/>
            <person name="Buysshaert C."/>
            <person name="Gielen J."/>
            <person name="Villarroel R."/>
            <person name="De Clercq R."/>
            <person name="van Montagu M."/>
            <person name="Rogers J."/>
            <person name="Cronin A."/>
            <person name="Quail M.A."/>
            <person name="Bray-Allen S."/>
            <person name="Clark L."/>
            <person name="Doggett J."/>
            <person name="Hall S."/>
            <person name="Kay M."/>
            <person name="Lennard N."/>
            <person name="McLay K."/>
            <person name="Mayes R."/>
            <person name="Pettett A."/>
            <person name="Rajandream M.A."/>
            <person name="Lyne M."/>
            <person name="Benes V."/>
            <person name="Rechmann S."/>
            <person name="Borkova D."/>
            <person name="Bloecker H."/>
            <person name="Scharfe M."/>
            <person name="Grimm M."/>
            <person name="Loehnert T.-H."/>
            <person name="Dose S."/>
            <person name="de Haan M."/>
            <person name="Maarse A.C."/>
            <person name="Schaefer M."/>
            <person name="Mueller-Auer S."/>
            <person name="Gabel C."/>
            <person name="Fuchs M."/>
            <person name="Fartmann B."/>
            <person name="Granderath K."/>
            <person name="Dauner D."/>
            <person name="Herzl A."/>
            <person name="Neumann S."/>
            <person name="Argiriou A."/>
            <person name="Vitale D."/>
            <person name="Liguori R."/>
            <person name="Piravandi E."/>
            <person name="Massenet O."/>
            <person name="Quigley F."/>
            <person name="Clabauld G."/>
            <person name="Muendlein A."/>
            <person name="Felber R."/>
            <person name="Schnabl S."/>
            <person name="Hiller R."/>
            <person name="Schmidt W."/>
            <person name="Lecharny A."/>
            <person name="Aubourg S."/>
            <person name="Chefdor F."/>
            <person name="Cooke R."/>
            <person name="Berger C."/>
            <person name="Monfort A."/>
            <person name="Casacuberta E."/>
            <person name="Gibbons T."/>
            <person name="Weber N."/>
            <person name="Vandenbol M."/>
            <person name="Bargues M."/>
            <person name="Terol J."/>
            <person name="Torres A."/>
            <person name="Perez-Perez A."/>
            <person name="Purnelle B."/>
            <person name="Bent E."/>
            <person name="Johnson S."/>
            <person name="Tacon D."/>
            <person name="Jesse T."/>
            <person name="Heijnen L."/>
            <person name="Schwarz S."/>
            <person name="Scholler P."/>
            <person name="Heber S."/>
            <person name="Francs P."/>
            <person name="Bielke C."/>
            <person name="Frishman D."/>
            <person name="Haase D."/>
            <person name="Lemcke K."/>
            <person name="Mewes H.-W."/>
            <person name="Stocker S."/>
            <person name="Zaccaria P."/>
            <person name="Bevan M."/>
            <person name="Wilson R.K."/>
            <person name="de la Bastide M."/>
            <person name="Habermann K."/>
            <person name="Parnell L."/>
            <person name="Dedhia N."/>
            <person name="Gnoj L."/>
            <person name="Schutz K."/>
            <person name="Huang E."/>
            <person name="Spiegel L."/>
            <person name="Sekhon M."/>
            <person name="Murray J."/>
            <person name="Sheet P."/>
            <person name="Cordes M."/>
            <person name="Abu-Threideh J."/>
            <person name="Stoneking T."/>
            <person name="Kalicki J."/>
            <person name="Graves T."/>
            <person name="Harmon G."/>
            <person name="Edwards J."/>
            <person name="Latreille P."/>
            <person name="Courtney L."/>
            <person name="Cloud J."/>
            <person name="Abbott A."/>
            <person name="Scott K."/>
            <person name="Johnson D."/>
            <person name="Minx P."/>
            <person name="Bentley D."/>
            <person name="Fulton B."/>
            <person name="Miller N."/>
            <person name="Greco T."/>
            <person name="Kemp K."/>
            <person name="Kramer J."/>
            <person name="Fulton L."/>
            <person name="Mardis E."/>
            <person name="Dante M."/>
            <person name="Pepin K."/>
            <person name="Hillier L.W."/>
            <person name="Nelson J."/>
            <person name="Spieth J."/>
            <person name="Ryan E."/>
            <person name="Andrews S."/>
            <person name="Geisel C."/>
            <person name="Layman D."/>
            <person name="Du H."/>
            <person name="Ali J."/>
            <person name="Berghoff A."/>
            <person name="Jones K."/>
            <person name="Drone K."/>
            <person name="Cotton M."/>
            <person name="Joshu C."/>
            <person name="Antonoiu B."/>
            <person name="Zidanic M."/>
            <person name="Strong C."/>
            <person name="Sun H."/>
            <person name="Lamar B."/>
            <person name="Yordan C."/>
            <person name="Ma P."/>
            <person name="Zhong J."/>
            <person name="Preston R."/>
            <person name="Vil D."/>
            <person name="Shekher M."/>
            <person name="Matero A."/>
            <person name="Shah R."/>
            <person name="Swaby I.K."/>
            <person name="O'Shaughnessy A."/>
            <person name="Rodriguez M."/>
            <person name="Hoffman J."/>
            <person name="Till S."/>
            <person name="Granat S."/>
            <person name="Shohdy N."/>
            <person name="Hasegawa A."/>
            <person name="Hameed A."/>
            <person name="Lodhi M."/>
            <person name="Johnson A."/>
            <person name="Chen E."/>
            <person name="Marra M.A."/>
            <person name="Martienssen R."/>
            <person name="McCombie W.R."/>
        </authorList>
    </citation>
    <scope>NUCLEOTIDE SEQUENCE [LARGE SCALE GENOMIC DNA]</scope>
    <source>
        <strain>cv. Columbia</strain>
    </source>
</reference>
<reference key="2">
    <citation type="journal article" date="2017" name="Plant J.">
        <title>Araport11: a complete reannotation of the Arabidopsis thaliana reference genome.</title>
        <authorList>
            <person name="Cheng C.Y."/>
            <person name="Krishnakumar V."/>
            <person name="Chan A.P."/>
            <person name="Thibaud-Nissen F."/>
            <person name="Schobel S."/>
            <person name="Town C.D."/>
        </authorList>
    </citation>
    <scope>GENOME REANNOTATION</scope>
    <source>
        <strain>cv. Columbia</strain>
    </source>
</reference>
<reference key="3">
    <citation type="journal article" date="2003" name="Science">
        <title>Empirical analysis of transcriptional activity in the Arabidopsis genome.</title>
        <authorList>
            <person name="Yamada K."/>
            <person name="Lim J."/>
            <person name="Dale J.M."/>
            <person name="Chen H."/>
            <person name="Shinn P."/>
            <person name="Palm C.J."/>
            <person name="Southwick A.M."/>
            <person name="Wu H.C."/>
            <person name="Kim C.J."/>
            <person name="Nguyen M."/>
            <person name="Pham P.K."/>
            <person name="Cheuk R.F."/>
            <person name="Karlin-Newmann G."/>
            <person name="Liu S.X."/>
            <person name="Lam B."/>
            <person name="Sakano H."/>
            <person name="Wu T."/>
            <person name="Yu G."/>
            <person name="Miranda M."/>
            <person name="Quach H.L."/>
            <person name="Tripp M."/>
            <person name="Chang C.H."/>
            <person name="Lee J.M."/>
            <person name="Toriumi M.J."/>
            <person name="Chan M.M."/>
            <person name="Tang C.C."/>
            <person name="Onodera C.S."/>
            <person name="Deng J.M."/>
            <person name="Akiyama K."/>
            <person name="Ansari Y."/>
            <person name="Arakawa T."/>
            <person name="Banh J."/>
            <person name="Banno F."/>
            <person name="Bowser L."/>
            <person name="Brooks S.Y."/>
            <person name="Carninci P."/>
            <person name="Chao Q."/>
            <person name="Choy N."/>
            <person name="Enju A."/>
            <person name="Goldsmith A.D."/>
            <person name="Gurjal M."/>
            <person name="Hansen N.F."/>
            <person name="Hayashizaki Y."/>
            <person name="Johnson-Hopson C."/>
            <person name="Hsuan V.W."/>
            <person name="Iida K."/>
            <person name="Karnes M."/>
            <person name="Khan S."/>
            <person name="Koesema E."/>
            <person name="Ishida J."/>
            <person name="Jiang P.X."/>
            <person name="Jones T."/>
            <person name="Kawai J."/>
            <person name="Kamiya A."/>
            <person name="Meyers C."/>
            <person name="Nakajima M."/>
            <person name="Narusaka M."/>
            <person name="Seki M."/>
            <person name="Sakurai T."/>
            <person name="Satou M."/>
            <person name="Tamse R."/>
            <person name="Vaysberg M."/>
            <person name="Wallender E.K."/>
            <person name="Wong C."/>
            <person name="Yamamura Y."/>
            <person name="Yuan S."/>
            <person name="Shinozaki K."/>
            <person name="Davis R.W."/>
            <person name="Theologis A."/>
            <person name="Ecker J.R."/>
        </authorList>
    </citation>
    <scope>NUCLEOTIDE SEQUENCE [LARGE SCALE MRNA]</scope>
    <source>
        <strain>cv. Columbia</strain>
    </source>
</reference>
<reference key="4">
    <citation type="unpublished observations" date="2003-09">
        <title>Single-stranded DNA binding protein from Arabidopsis thaliana. Cloning, overexpression and biophysical characterization.</title>
        <authorList>
            <person name="Hagemann K."/>
            <person name="Urbanke C."/>
            <person name="Curth U."/>
        </authorList>
    </citation>
    <scope>FUNCTION</scope>
</reference>
<gene>
    <name type="ordered locus">At4g11060</name>
    <name type="ORF">F2P3.2</name>
    <name type="ORF">T22B4.40</name>
</gene>
<proteinExistence type="evidence at transcript level"/>
<feature type="transit peptide" description="Mitochondrion" evidence="1">
    <location>
        <begin position="1"/>
        <end status="unknown"/>
    </location>
</feature>
<feature type="chain" id="PRO_0000033269" description="Single-stranded DNA-binding protein, mitochondrial">
    <location>
        <begin status="unknown"/>
        <end position="201"/>
    </location>
</feature>
<feature type="domain" description="SSB" evidence="2">
    <location>
        <begin position="71"/>
        <end position="184"/>
    </location>
</feature>
<evidence type="ECO:0000255" key="1"/>
<evidence type="ECO:0000255" key="2">
    <source>
        <dbReference type="PROSITE-ProRule" id="PRU00252"/>
    </source>
</evidence>
<evidence type="ECO:0000269" key="3">
    <source ref="4"/>
</evidence>
<evidence type="ECO:0000305" key="4"/>
<accession>Q84J78</accession>
<accession>O82512</accession>
<accession>Q9T011</accession>
<dbReference type="EMBL" id="AF080120">
    <property type="protein sequence ID" value="AAC35538.1"/>
    <property type="status" value="ALT_SEQ"/>
    <property type="molecule type" value="Genomic_DNA"/>
</dbReference>
<dbReference type="EMBL" id="AL049876">
    <property type="protein sequence ID" value="CAB43041.1"/>
    <property type="status" value="ALT_SEQ"/>
    <property type="molecule type" value="Genomic_DNA"/>
</dbReference>
<dbReference type="EMBL" id="AL161518">
    <property type="protein sequence ID" value="CAB81207.1"/>
    <property type="status" value="ALT_SEQ"/>
    <property type="molecule type" value="Genomic_DNA"/>
</dbReference>
<dbReference type="EMBL" id="CP002687">
    <property type="protein sequence ID" value="AEE82967.1"/>
    <property type="molecule type" value="Genomic_DNA"/>
</dbReference>
<dbReference type="EMBL" id="BT004166">
    <property type="protein sequence ID" value="AAO42186.1"/>
    <property type="molecule type" value="mRNA"/>
</dbReference>
<dbReference type="EMBL" id="BT005015">
    <property type="protein sequence ID" value="AAO50548.1"/>
    <property type="molecule type" value="mRNA"/>
</dbReference>
<dbReference type="PIR" id="T08185">
    <property type="entry name" value="T08185"/>
</dbReference>
<dbReference type="SMR" id="Q84J78"/>
<dbReference type="BioGRID" id="12006">
    <property type="interactions" value="4"/>
</dbReference>
<dbReference type="FunCoup" id="Q84J78">
    <property type="interactions" value="2257"/>
</dbReference>
<dbReference type="STRING" id="3702.Q84J78"/>
<dbReference type="PaxDb" id="3702-AT4G11060.1"/>
<dbReference type="ProteomicsDB" id="228411"/>
<dbReference type="EnsemblPlants" id="AT4G11060.1">
    <property type="protein sequence ID" value="AT4G11060.1"/>
    <property type="gene ID" value="AT4G11060"/>
</dbReference>
<dbReference type="GeneID" id="826707"/>
<dbReference type="Gramene" id="AT4G11060.1">
    <property type="protein sequence ID" value="AT4G11060.1"/>
    <property type="gene ID" value="AT4G11060"/>
</dbReference>
<dbReference type="KEGG" id="ath:AT4G11060"/>
<dbReference type="Araport" id="AT4G11060"/>
<dbReference type="TAIR" id="AT4G11060">
    <property type="gene designation" value="MTSSB"/>
</dbReference>
<dbReference type="eggNOG" id="KOG1653">
    <property type="taxonomic scope" value="Eukaryota"/>
</dbReference>
<dbReference type="HOGENOM" id="CLU_076740_1_0_1"/>
<dbReference type="InParanoid" id="Q84J78"/>
<dbReference type="OMA" id="IAVHNDT"/>
<dbReference type="PhylomeDB" id="Q84J78"/>
<dbReference type="PRO" id="PR:Q84J78"/>
<dbReference type="Proteomes" id="UP000006548">
    <property type="component" value="Chromosome 4"/>
</dbReference>
<dbReference type="ExpressionAtlas" id="Q84J78">
    <property type="expression patterns" value="baseline and differential"/>
</dbReference>
<dbReference type="GO" id="GO:0005739">
    <property type="term" value="C:mitochondrion"/>
    <property type="evidence" value="ECO:0007669"/>
    <property type="project" value="UniProtKB-SubCell"/>
</dbReference>
<dbReference type="GO" id="GO:0003729">
    <property type="term" value="F:mRNA binding"/>
    <property type="evidence" value="ECO:0000314"/>
    <property type="project" value="TAIR"/>
</dbReference>
<dbReference type="GO" id="GO:0003697">
    <property type="term" value="F:single-stranded DNA binding"/>
    <property type="evidence" value="ECO:0000314"/>
    <property type="project" value="TAIR"/>
</dbReference>
<dbReference type="GO" id="GO:0006260">
    <property type="term" value="P:DNA replication"/>
    <property type="evidence" value="ECO:0007669"/>
    <property type="project" value="InterPro"/>
</dbReference>
<dbReference type="FunFam" id="2.40.50.140:FF:000160">
    <property type="entry name" value="single-stranded DNA-binding protein, mitochondrial"/>
    <property type="match status" value="1"/>
</dbReference>
<dbReference type="Gene3D" id="2.40.50.140">
    <property type="entry name" value="Nucleic acid-binding proteins"/>
    <property type="match status" value="1"/>
</dbReference>
<dbReference type="InterPro" id="IPR012340">
    <property type="entry name" value="NA-bd_OB-fold"/>
</dbReference>
<dbReference type="InterPro" id="IPR000424">
    <property type="entry name" value="Primosome_PriB/ssb"/>
</dbReference>
<dbReference type="InterPro" id="IPR011344">
    <property type="entry name" value="ssDNA-bd"/>
</dbReference>
<dbReference type="PANTHER" id="PTHR10302">
    <property type="entry name" value="SINGLE-STRANDED DNA-BINDING PROTEIN"/>
    <property type="match status" value="1"/>
</dbReference>
<dbReference type="PANTHER" id="PTHR10302:SF13">
    <property type="entry name" value="SINGLE-STRANDED DNA-BINDING PROTEIN, MITOCHONDRIAL"/>
    <property type="match status" value="1"/>
</dbReference>
<dbReference type="Pfam" id="PF00436">
    <property type="entry name" value="SSB"/>
    <property type="match status" value="1"/>
</dbReference>
<dbReference type="PIRSF" id="PIRSF002070">
    <property type="entry name" value="SSB"/>
    <property type="match status" value="1"/>
</dbReference>
<dbReference type="SUPFAM" id="SSF50249">
    <property type="entry name" value="Nucleic acid-binding proteins"/>
    <property type="match status" value="1"/>
</dbReference>
<dbReference type="PROSITE" id="PS50935">
    <property type="entry name" value="SSB"/>
    <property type="match status" value="1"/>
</dbReference>
<comment type="function">
    <text evidence="3">Binds to ss-DNA.</text>
</comment>
<comment type="subcellular location">
    <subcellularLocation>
        <location evidence="4">Mitochondrion</location>
    </subcellularLocation>
</comment>
<comment type="sequence caution" evidence="4">
    <conflict type="erroneous gene model prediction">
        <sequence resource="EMBL-CDS" id="AAC35538"/>
    </conflict>
</comment>
<comment type="sequence caution" evidence="4">
    <conflict type="erroneous gene model prediction">
        <sequence resource="EMBL-CDS" id="CAB43041"/>
    </conflict>
</comment>
<comment type="sequence caution" evidence="4">
    <conflict type="erroneous gene model prediction">
        <sequence resource="EMBL-CDS" id="CAB81207"/>
    </conflict>
</comment>
<organism>
    <name type="scientific">Arabidopsis thaliana</name>
    <name type="common">Mouse-ear cress</name>
    <dbReference type="NCBI Taxonomy" id="3702"/>
    <lineage>
        <taxon>Eukaryota</taxon>
        <taxon>Viridiplantae</taxon>
        <taxon>Streptophyta</taxon>
        <taxon>Embryophyta</taxon>
        <taxon>Tracheophyta</taxon>
        <taxon>Spermatophyta</taxon>
        <taxon>Magnoliopsida</taxon>
        <taxon>eudicotyledons</taxon>
        <taxon>Gunneridae</taxon>
        <taxon>Pentapetalae</taxon>
        <taxon>rosids</taxon>
        <taxon>malvids</taxon>
        <taxon>Brassicales</taxon>
        <taxon>Brassicaceae</taxon>
        <taxon>Camelineae</taxon>
        <taxon>Arabidopsis</taxon>
    </lineage>
</organism>